<evidence type="ECO:0000250" key="1"/>
<evidence type="ECO:0000305" key="2"/>
<evidence type="ECO:0000305" key="3">
    <source>
    </source>
</evidence>
<dbReference type="EMBL" id="DQ317577">
    <property type="protein sequence ID" value="ABC47420.1"/>
    <property type="molecule type" value="mRNA"/>
</dbReference>
<dbReference type="SMR" id="P0DKF2"/>
<dbReference type="GO" id="GO:0005938">
    <property type="term" value="C:cell cortex"/>
    <property type="evidence" value="ECO:0007669"/>
    <property type="project" value="TreeGrafter"/>
</dbReference>
<dbReference type="GO" id="GO:0005856">
    <property type="term" value="C:cytoskeleton"/>
    <property type="evidence" value="ECO:0007669"/>
    <property type="project" value="UniProtKB-SubCell"/>
</dbReference>
<dbReference type="GO" id="GO:0003785">
    <property type="term" value="F:actin monomer binding"/>
    <property type="evidence" value="ECO:0007669"/>
    <property type="project" value="TreeGrafter"/>
</dbReference>
<dbReference type="CDD" id="cd00148">
    <property type="entry name" value="PROF"/>
    <property type="match status" value="1"/>
</dbReference>
<dbReference type="FunFam" id="3.30.450.30:FF:000001">
    <property type="entry name" value="Profilin"/>
    <property type="match status" value="1"/>
</dbReference>
<dbReference type="Gene3D" id="3.30.450.30">
    <property type="entry name" value="Dynein light chain 2a, cytoplasmic"/>
    <property type="match status" value="1"/>
</dbReference>
<dbReference type="InterPro" id="IPR048278">
    <property type="entry name" value="PFN"/>
</dbReference>
<dbReference type="InterPro" id="IPR005455">
    <property type="entry name" value="PFN_euk"/>
</dbReference>
<dbReference type="InterPro" id="IPR036140">
    <property type="entry name" value="PFN_sf"/>
</dbReference>
<dbReference type="InterPro" id="IPR027310">
    <property type="entry name" value="Profilin_CS"/>
</dbReference>
<dbReference type="PANTHER" id="PTHR11604">
    <property type="entry name" value="PROFILIN"/>
    <property type="match status" value="1"/>
</dbReference>
<dbReference type="PANTHER" id="PTHR11604:SF25">
    <property type="entry name" value="PROFILIN-5"/>
    <property type="match status" value="1"/>
</dbReference>
<dbReference type="Pfam" id="PF00235">
    <property type="entry name" value="Profilin"/>
    <property type="match status" value="1"/>
</dbReference>
<dbReference type="PRINTS" id="PR00392">
    <property type="entry name" value="PROFILIN"/>
</dbReference>
<dbReference type="PRINTS" id="PR01640">
    <property type="entry name" value="PROFILINPLNT"/>
</dbReference>
<dbReference type="SMART" id="SM00392">
    <property type="entry name" value="PROF"/>
    <property type="match status" value="1"/>
</dbReference>
<dbReference type="SUPFAM" id="SSF55770">
    <property type="entry name" value="Profilin (actin-binding protein)"/>
    <property type="match status" value="1"/>
</dbReference>
<dbReference type="PROSITE" id="PS00414">
    <property type="entry name" value="PROFILIN"/>
    <property type="match status" value="1"/>
</dbReference>
<sequence>MSWQAYVDDHLMCDIEGHEGHRLTAAAIVGHDGSVWAQSATFPQFKPEEMNGIMTDFNEPGHLAPTGLHLGGTKYMVIQGEAGAVIRGKKGSGGITIKKTGQALVCGIYEEPVTPGQCNMVVERLGDYLLEQGL</sequence>
<accession>P0DKF2</accession>
<accession>A4GD57</accession>
<name>PROAH_OLEEU</name>
<keyword id="KW-0009">Actin-binding</keyword>
<keyword id="KW-0020">Allergen</keyword>
<keyword id="KW-0963">Cytoplasm</keyword>
<keyword id="KW-0206">Cytoskeleton</keyword>
<keyword id="KW-1015">Disulfide bond</keyword>
<keyword id="KW-0597">Phosphoprotein</keyword>
<comment type="function">
    <text evidence="1">Binds to actin and affects the structure of the cytoskeleton. At high concentrations, profilin prevents the polymerization of actin, whereas it enhances it at low concentrations (By similarity).</text>
</comment>
<comment type="subunit">
    <text evidence="1">Occurs in many kinds of cells as a complex with monomeric actin in a 1:1 ratio.</text>
</comment>
<comment type="subcellular location">
    <subcellularLocation>
        <location evidence="1">Cytoplasm</location>
        <location evidence="1">Cytoskeleton</location>
    </subcellularLocation>
</comment>
<comment type="PTM">
    <text evidence="1">Phosphorylated by MAP kinases.</text>
</comment>
<comment type="polymorphism">
    <text>Several isoforms of the allergen exist due to polymorphism.</text>
</comment>
<comment type="allergen">
    <text>Causes an allergic reaction in human.</text>
</comment>
<comment type="miscellaneous">
    <text evidence="3">The variability of the residues taking part of IgE-binding epitopes might be responsible of the difference in cross-reactivity among olive pollen cultivars, and between distantly related pollen species, leading to a variable range of allergy reactions among atopic patients.</text>
</comment>
<comment type="similarity">
    <text evidence="2">Belongs to the profilin family.</text>
</comment>
<feature type="initiator methionine" description="Removed" evidence="1">
    <location>
        <position position="1"/>
    </location>
</feature>
<feature type="chain" id="PRO_0000424999" description="Profilin-1">
    <location>
        <begin position="2"/>
        <end position="134"/>
    </location>
</feature>
<feature type="short sequence motif" description="Involved in PIP2 interaction">
    <location>
        <begin position="84"/>
        <end position="100"/>
    </location>
</feature>
<feature type="modified residue" description="Phosphothreonine" evidence="1">
    <location>
        <position position="114"/>
    </location>
</feature>
<feature type="disulfide bond" evidence="3">
    <location>
        <begin position="13"/>
        <end position="118"/>
    </location>
</feature>
<organism>
    <name type="scientific">Olea europaea</name>
    <name type="common">Common olive</name>
    <dbReference type="NCBI Taxonomy" id="4146"/>
    <lineage>
        <taxon>Eukaryota</taxon>
        <taxon>Viridiplantae</taxon>
        <taxon>Streptophyta</taxon>
        <taxon>Embryophyta</taxon>
        <taxon>Tracheophyta</taxon>
        <taxon>Spermatophyta</taxon>
        <taxon>Magnoliopsida</taxon>
        <taxon>eudicotyledons</taxon>
        <taxon>Gunneridae</taxon>
        <taxon>Pentapetalae</taxon>
        <taxon>asterids</taxon>
        <taxon>lamiids</taxon>
        <taxon>Lamiales</taxon>
        <taxon>Oleaceae</taxon>
        <taxon>Oleeae</taxon>
        <taxon>Olea</taxon>
    </lineage>
</organism>
<reference key="1">
    <citation type="journal article" date="2012" name="PLoS ONE">
        <title>Characterization of profilin polymorphism in pollen with a focus on multifunctionality.</title>
        <authorList>
            <person name="Jimenez-Lopez J.C."/>
            <person name="Morales S."/>
            <person name="Castro A.J."/>
            <person name="Volkmann D."/>
            <person name="Rodriguez-Garcia M.I."/>
            <person name="Alche Jde D."/>
        </authorList>
    </citation>
    <scope>NUCLEOTIDE SEQUENCE [MRNA]</scope>
    <scope>POLYMORPHISM</scope>
    <source>
        <strain>cv. Sourani</strain>
        <tissue>Pollen</tissue>
    </source>
</reference>
<reference key="2">
    <citation type="journal article" date="2013" name="PLoS ONE">
        <title>Analysis of the effects of polymorphism on pollen profilin structural functionality and the generation of conformational, T- and B-cell epitopes.</title>
        <authorList>
            <person name="Jimenez-Lopez J.C."/>
            <person name="Rodriguez-Garcia M.I."/>
            <person name="Alche J.D."/>
        </authorList>
    </citation>
    <scope>3D-STRUCTURE MODELING</scope>
    <scope>DISULFIDE BOND</scope>
</reference>
<proteinExistence type="evidence at protein level"/>
<protein>
    <recommendedName>
        <fullName>Profilin-1</fullName>
    </recommendedName>
    <alternativeName>
        <fullName>Pollen allergen Ole e 2</fullName>
    </alternativeName>
    <allergenName>Ole e 2</allergenName>
</protein>